<feature type="chain" id="PRO_1000135914" description="2,3-bisphosphoglycerate-dependent phosphoglycerate mutase">
    <location>
        <begin position="1"/>
        <end position="248"/>
    </location>
</feature>
<feature type="active site" description="Tele-phosphohistidine intermediate" evidence="1">
    <location>
        <position position="9"/>
    </location>
</feature>
<feature type="active site" description="Proton donor/acceptor" evidence="1">
    <location>
        <position position="87"/>
    </location>
</feature>
<feature type="binding site" evidence="1">
    <location>
        <begin position="8"/>
        <end position="15"/>
    </location>
    <ligand>
        <name>substrate</name>
    </ligand>
</feature>
<feature type="binding site" evidence="1">
    <location>
        <begin position="21"/>
        <end position="22"/>
    </location>
    <ligand>
        <name>substrate</name>
    </ligand>
</feature>
<feature type="binding site" evidence="1">
    <location>
        <position position="60"/>
    </location>
    <ligand>
        <name>substrate</name>
    </ligand>
</feature>
<feature type="binding site" evidence="1">
    <location>
        <begin position="87"/>
        <end position="90"/>
    </location>
    <ligand>
        <name>substrate</name>
    </ligand>
</feature>
<feature type="binding site" evidence="1">
    <location>
        <position position="98"/>
    </location>
    <ligand>
        <name>substrate</name>
    </ligand>
</feature>
<feature type="binding site" evidence="1">
    <location>
        <begin position="114"/>
        <end position="115"/>
    </location>
    <ligand>
        <name>substrate</name>
    </ligand>
</feature>
<feature type="binding site" evidence="1">
    <location>
        <begin position="183"/>
        <end position="184"/>
    </location>
    <ligand>
        <name>substrate</name>
    </ligand>
</feature>
<feature type="site" description="Transition state stabilizer" evidence="1">
    <location>
        <position position="182"/>
    </location>
</feature>
<protein>
    <recommendedName>
        <fullName evidence="1">2,3-bisphosphoglycerate-dependent phosphoglycerate mutase</fullName>
        <shortName evidence="1">BPG-dependent PGAM</shortName>
        <shortName evidence="1">PGAM</shortName>
        <shortName evidence="1">Phosphoglyceromutase</shortName>
        <shortName evidence="1">dPGM</shortName>
        <ecNumber evidence="1">5.4.2.11</ecNumber>
    </recommendedName>
</protein>
<name>GPMA_ALTMD</name>
<comment type="function">
    <text evidence="1">Catalyzes the interconversion of 2-phosphoglycerate and 3-phosphoglycerate.</text>
</comment>
<comment type="catalytic activity">
    <reaction evidence="1">
        <text>(2R)-2-phosphoglycerate = (2R)-3-phosphoglycerate</text>
        <dbReference type="Rhea" id="RHEA:15901"/>
        <dbReference type="ChEBI" id="CHEBI:58272"/>
        <dbReference type="ChEBI" id="CHEBI:58289"/>
        <dbReference type="EC" id="5.4.2.11"/>
    </reaction>
</comment>
<comment type="pathway">
    <text evidence="1">Carbohydrate degradation; glycolysis; pyruvate from D-glyceraldehyde 3-phosphate: step 3/5.</text>
</comment>
<comment type="subunit">
    <text evidence="1">Homodimer.</text>
</comment>
<comment type="similarity">
    <text evidence="1">Belongs to the phosphoglycerate mutase family. BPG-dependent PGAM subfamily.</text>
</comment>
<evidence type="ECO:0000255" key="1">
    <source>
        <dbReference type="HAMAP-Rule" id="MF_01039"/>
    </source>
</evidence>
<keyword id="KW-0312">Gluconeogenesis</keyword>
<keyword id="KW-0324">Glycolysis</keyword>
<keyword id="KW-0413">Isomerase</keyword>
<organism>
    <name type="scientific">Alteromonas mediterranea (strain DSM 17117 / CIP 110805 / LMG 28347 / Deep ecotype)</name>
    <dbReference type="NCBI Taxonomy" id="1774373"/>
    <lineage>
        <taxon>Bacteria</taxon>
        <taxon>Pseudomonadati</taxon>
        <taxon>Pseudomonadota</taxon>
        <taxon>Gammaproteobacteria</taxon>
        <taxon>Alteromonadales</taxon>
        <taxon>Alteromonadaceae</taxon>
        <taxon>Alteromonas/Salinimonas group</taxon>
        <taxon>Alteromonas</taxon>
    </lineage>
</organism>
<dbReference type="EC" id="5.4.2.11" evidence="1"/>
<dbReference type="EMBL" id="CP001103">
    <property type="protein sequence ID" value="AEA96582.1"/>
    <property type="molecule type" value="Genomic_DNA"/>
</dbReference>
<dbReference type="EMBL" id="CP001103">
    <property type="protein sequence ID" value="AEA96595.1"/>
    <property type="molecule type" value="Genomic_DNA"/>
</dbReference>
<dbReference type="SMR" id="B4RZM6"/>
<dbReference type="KEGG" id="amc:MADE_1002230"/>
<dbReference type="HOGENOM" id="CLU_033323_1_1_6"/>
<dbReference type="UniPathway" id="UPA00109">
    <property type="reaction ID" value="UER00186"/>
</dbReference>
<dbReference type="Proteomes" id="UP000001870">
    <property type="component" value="Chromosome"/>
</dbReference>
<dbReference type="GO" id="GO:0004619">
    <property type="term" value="F:phosphoglycerate mutase activity"/>
    <property type="evidence" value="ECO:0007669"/>
    <property type="project" value="UniProtKB-EC"/>
</dbReference>
<dbReference type="GO" id="GO:0006094">
    <property type="term" value="P:gluconeogenesis"/>
    <property type="evidence" value="ECO:0007669"/>
    <property type="project" value="UniProtKB-UniRule"/>
</dbReference>
<dbReference type="GO" id="GO:0006096">
    <property type="term" value="P:glycolytic process"/>
    <property type="evidence" value="ECO:0007669"/>
    <property type="project" value="UniProtKB-UniRule"/>
</dbReference>
<dbReference type="CDD" id="cd07067">
    <property type="entry name" value="HP_PGM_like"/>
    <property type="match status" value="1"/>
</dbReference>
<dbReference type="FunFam" id="3.40.50.1240:FF:000003">
    <property type="entry name" value="2,3-bisphosphoglycerate-dependent phosphoglycerate mutase"/>
    <property type="match status" value="1"/>
</dbReference>
<dbReference type="Gene3D" id="3.40.50.1240">
    <property type="entry name" value="Phosphoglycerate mutase-like"/>
    <property type="match status" value="1"/>
</dbReference>
<dbReference type="HAMAP" id="MF_01039">
    <property type="entry name" value="PGAM_GpmA"/>
    <property type="match status" value="1"/>
</dbReference>
<dbReference type="InterPro" id="IPR013078">
    <property type="entry name" value="His_Pase_superF_clade-1"/>
</dbReference>
<dbReference type="InterPro" id="IPR029033">
    <property type="entry name" value="His_PPase_superfam"/>
</dbReference>
<dbReference type="InterPro" id="IPR001345">
    <property type="entry name" value="PG/BPGM_mutase_AS"/>
</dbReference>
<dbReference type="InterPro" id="IPR005952">
    <property type="entry name" value="Phosphogly_mut1"/>
</dbReference>
<dbReference type="NCBIfam" id="TIGR01258">
    <property type="entry name" value="pgm_1"/>
    <property type="match status" value="1"/>
</dbReference>
<dbReference type="NCBIfam" id="NF010713">
    <property type="entry name" value="PRK14115.1"/>
    <property type="match status" value="1"/>
</dbReference>
<dbReference type="PANTHER" id="PTHR11931">
    <property type="entry name" value="PHOSPHOGLYCERATE MUTASE"/>
    <property type="match status" value="1"/>
</dbReference>
<dbReference type="Pfam" id="PF00300">
    <property type="entry name" value="His_Phos_1"/>
    <property type="match status" value="1"/>
</dbReference>
<dbReference type="PIRSF" id="PIRSF000709">
    <property type="entry name" value="6PFK_2-Ptase"/>
    <property type="match status" value="1"/>
</dbReference>
<dbReference type="SMART" id="SM00855">
    <property type="entry name" value="PGAM"/>
    <property type="match status" value="1"/>
</dbReference>
<dbReference type="SUPFAM" id="SSF53254">
    <property type="entry name" value="Phosphoglycerate mutase-like"/>
    <property type="match status" value="1"/>
</dbReference>
<dbReference type="PROSITE" id="PS00175">
    <property type="entry name" value="PG_MUTASE"/>
    <property type="match status" value="1"/>
</dbReference>
<sequence>MYKLVLIRHGESQWNLENRFTGWHDVDLTDTGVAQAKTAGQLLKDAGFTFDQAYTSVLLRAIKTLNIALEEMGQHYLPVERHWRLNERHYGALTGLDKAETAAKHGEEQVKIWRRSFDIPPPAVEDDSEHFPGHDPRYNNVDADILPRGESLKLTIERVLPYWHDVIRPDIQAGKRVIIAAHGNSLRALVKYLDGMSDEEVLGLNIPTGVPLVYELDENLKPISKEYLGDADAIKAMMDAVAKQGQAK</sequence>
<accession>B4RZM6</accession>
<accession>F2G5M8</accession>
<gene>
    <name evidence="1" type="primary">gpmA1</name>
    <name type="ordered locus">MADE_1002165</name>
</gene>
<gene>
    <name evidence="1" type="primary">gpmA2</name>
    <name type="ordered locus">MADE_1002230</name>
</gene>
<reference key="1">
    <citation type="journal article" date="2008" name="ISME J.">
        <title>Comparative genomics of two ecotypes of the marine planktonic copiotroph Alteromonas macleodii suggests alternative lifestyles associated with different kinds of particulate organic matter.</title>
        <authorList>
            <person name="Ivars-Martinez E."/>
            <person name="Martin-Cuadrado A.-B."/>
            <person name="D'Auria G."/>
            <person name="Mira A."/>
            <person name="Ferriera S."/>
            <person name="Johnson J."/>
            <person name="Friedman R."/>
            <person name="Rodriguez-Valera F."/>
        </authorList>
    </citation>
    <scope>NUCLEOTIDE SEQUENCE [LARGE SCALE GENOMIC DNA]</scope>
    <source>
        <strain>DSM 17117 / CIP 110805 / LMG 28347 / Deep ecotype</strain>
    </source>
</reference>
<proteinExistence type="inferred from homology"/>